<reference key="1">
    <citation type="journal article" date="2000" name="Nature">
        <title>Sequence and analysis of chromosome 5 of the plant Arabidopsis thaliana.</title>
        <authorList>
            <person name="Tabata S."/>
            <person name="Kaneko T."/>
            <person name="Nakamura Y."/>
            <person name="Kotani H."/>
            <person name="Kato T."/>
            <person name="Asamizu E."/>
            <person name="Miyajima N."/>
            <person name="Sasamoto S."/>
            <person name="Kimura T."/>
            <person name="Hosouchi T."/>
            <person name="Kawashima K."/>
            <person name="Kohara M."/>
            <person name="Matsumoto M."/>
            <person name="Matsuno A."/>
            <person name="Muraki A."/>
            <person name="Nakayama S."/>
            <person name="Nakazaki N."/>
            <person name="Naruo K."/>
            <person name="Okumura S."/>
            <person name="Shinpo S."/>
            <person name="Takeuchi C."/>
            <person name="Wada T."/>
            <person name="Watanabe A."/>
            <person name="Yamada M."/>
            <person name="Yasuda M."/>
            <person name="Sato S."/>
            <person name="de la Bastide M."/>
            <person name="Huang E."/>
            <person name="Spiegel L."/>
            <person name="Gnoj L."/>
            <person name="O'Shaughnessy A."/>
            <person name="Preston R."/>
            <person name="Habermann K."/>
            <person name="Murray J."/>
            <person name="Johnson D."/>
            <person name="Rohlfing T."/>
            <person name="Nelson J."/>
            <person name="Stoneking T."/>
            <person name="Pepin K."/>
            <person name="Spieth J."/>
            <person name="Sekhon M."/>
            <person name="Armstrong J."/>
            <person name="Becker M."/>
            <person name="Belter E."/>
            <person name="Cordum H."/>
            <person name="Cordes M."/>
            <person name="Courtney L."/>
            <person name="Courtney W."/>
            <person name="Dante M."/>
            <person name="Du H."/>
            <person name="Edwards J."/>
            <person name="Fryman J."/>
            <person name="Haakensen B."/>
            <person name="Lamar E."/>
            <person name="Latreille P."/>
            <person name="Leonard S."/>
            <person name="Meyer R."/>
            <person name="Mulvaney E."/>
            <person name="Ozersky P."/>
            <person name="Riley A."/>
            <person name="Strowmatt C."/>
            <person name="Wagner-McPherson C."/>
            <person name="Wollam A."/>
            <person name="Yoakum M."/>
            <person name="Bell M."/>
            <person name="Dedhia N."/>
            <person name="Parnell L."/>
            <person name="Shah R."/>
            <person name="Rodriguez M."/>
            <person name="Hoon See L."/>
            <person name="Vil D."/>
            <person name="Baker J."/>
            <person name="Kirchoff K."/>
            <person name="Toth K."/>
            <person name="King L."/>
            <person name="Bahret A."/>
            <person name="Miller B."/>
            <person name="Marra M.A."/>
            <person name="Martienssen R."/>
            <person name="McCombie W.R."/>
            <person name="Wilson R.K."/>
            <person name="Murphy G."/>
            <person name="Bancroft I."/>
            <person name="Volckaert G."/>
            <person name="Wambutt R."/>
            <person name="Duesterhoeft A."/>
            <person name="Stiekema W."/>
            <person name="Pohl T."/>
            <person name="Entian K.-D."/>
            <person name="Terryn N."/>
            <person name="Hartley N."/>
            <person name="Bent E."/>
            <person name="Johnson S."/>
            <person name="Langham S.-A."/>
            <person name="McCullagh B."/>
            <person name="Robben J."/>
            <person name="Grymonprez B."/>
            <person name="Zimmermann W."/>
            <person name="Ramsperger U."/>
            <person name="Wedler H."/>
            <person name="Balke K."/>
            <person name="Wedler E."/>
            <person name="Peters S."/>
            <person name="van Staveren M."/>
            <person name="Dirkse W."/>
            <person name="Mooijman P."/>
            <person name="Klein Lankhorst R."/>
            <person name="Weitzenegger T."/>
            <person name="Bothe G."/>
            <person name="Rose M."/>
            <person name="Hauf J."/>
            <person name="Berneiser S."/>
            <person name="Hempel S."/>
            <person name="Feldpausch M."/>
            <person name="Lamberth S."/>
            <person name="Villarroel R."/>
            <person name="Gielen J."/>
            <person name="Ardiles W."/>
            <person name="Bents O."/>
            <person name="Lemcke K."/>
            <person name="Kolesov G."/>
            <person name="Mayer K.F.X."/>
            <person name="Rudd S."/>
            <person name="Schoof H."/>
            <person name="Schueller C."/>
            <person name="Zaccaria P."/>
            <person name="Mewes H.-W."/>
            <person name="Bevan M."/>
            <person name="Fransz P.F."/>
        </authorList>
    </citation>
    <scope>NUCLEOTIDE SEQUENCE [LARGE SCALE GENOMIC DNA]</scope>
    <source>
        <strain>cv. Columbia</strain>
    </source>
</reference>
<reference key="2">
    <citation type="journal article" date="2017" name="Plant J.">
        <title>Araport11: a complete reannotation of the Arabidopsis thaliana reference genome.</title>
        <authorList>
            <person name="Cheng C.Y."/>
            <person name="Krishnakumar V."/>
            <person name="Chan A.P."/>
            <person name="Thibaud-Nissen F."/>
            <person name="Schobel S."/>
            <person name="Town C.D."/>
        </authorList>
    </citation>
    <scope>GENOME REANNOTATION</scope>
    <source>
        <strain>cv. Columbia</strain>
    </source>
</reference>
<reference key="3">
    <citation type="submission" date="2002-03" db="EMBL/GenBank/DDBJ databases">
        <title>Full-length cDNA from Arabidopsis thaliana.</title>
        <authorList>
            <person name="Brover V.V."/>
            <person name="Troukhan M.E."/>
            <person name="Alexandrov N.A."/>
            <person name="Lu Y.-P."/>
            <person name="Flavell R.B."/>
            <person name="Feldmann K.A."/>
        </authorList>
    </citation>
    <scope>NUCLEOTIDE SEQUENCE [LARGE SCALE MRNA]</scope>
</reference>
<reference key="4">
    <citation type="journal article" date="2001" name="Plant Physiol.">
        <title>The organization of cytoplasmic ribosomal protein genes in the Arabidopsis genome.</title>
        <authorList>
            <person name="Barakat A."/>
            <person name="Szick-Miranda K."/>
            <person name="Chang I.-F."/>
            <person name="Guyot R."/>
            <person name="Blanc G."/>
            <person name="Cooke R."/>
            <person name="Delseny M."/>
            <person name="Bailey-Serres J."/>
        </authorList>
    </citation>
    <scope>GENE FAMILY ORGANIZATION</scope>
    <scope>NOMENCLATURE</scope>
</reference>
<reference key="5">
    <citation type="journal article" date="2023" name="Plant Cell">
        <title>An updated nomenclature for plant ribosomal protein genes.</title>
        <authorList>
            <person name="Scarpin M.R."/>
            <person name="Busche M."/>
            <person name="Martinez R.E."/>
            <person name="Harper L.C."/>
            <person name="Reiser L."/>
            <person name="Szakonyi D."/>
            <person name="Merchante C."/>
            <person name="Lan T."/>
            <person name="Xiong W."/>
            <person name="Mo B."/>
            <person name="Tang G."/>
            <person name="Chen X."/>
            <person name="Bailey-Serres J."/>
            <person name="Browning K.S."/>
            <person name="Brunkard J.O."/>
        </authorList>
    </citation>
    <scope>NOMENCLATURE</scope>
</reference>
<feature type="chain" id="PRO_0000130040" description="Small ribosomal subunit protein uS19z">
    <location>
        <begin position="1"/>
        <end position="152"/>
    </location>
</feature>
<gene>
    <name type="primary">RPS15B</name>
    <name type="ordered locus">At5g09490</name>
    <name type="ORF">T5E8_290</name>
</gene>
<comment type="subcellular location">
    <subcellularLocation>
        <location>Cytoplasm</location>
    </subcellularLocation>
</comment>
<comment type="similarity">
    <text evidence="2">Belongs to the universal ribosomal protein uS19 family.</text>
</comment>
<proteinExistence type="evidence at transcript level"/>
<keyword id="KW-0963">Cytoplasm</keyword>
<keyword id="KW-1185">Reference proteome</keyword>
<keyword id="KW-0687">Ribonucleoprotein</keyword>
<keyword id="KW-0689">Ribosomal protein</keyword>
<organism>
    <name type="scientific">Arabidopsis thaliana</name>
    <name type="common">Mouse-ear cress</name>
    <dbReference type="NCBI Taxonomy" id="3702"/>
    <lineage>
        <taxon>Eukaryota</taxon>
        <taxon>Viridiplantae</taxon>
        <taxon>Streptophyta</taxon>
        <taxon>Embryophyta</taxon>
        <taxon>Tracheophyta</taxon>
        <taxon>Spermatophyta</taxon>
        <taxon>Magnoliopsida</taxon>
        <taxon>eudicotyledons</taxon>
        <taxon>Gunneridae</taxon>
        <taxon>Pentapetalae</taxon>
        <taxon>rosids</taxon>
        <taxon>malvids</taxon>
        <taxon>Brassicales</taxon>
        <taxon>Brassicaceae</taxon>
        <taxon>Camelineae</taxon>
        <taxon>Arabidopsis</taxon>
    </lineage>
</organism>
<name>RS152_ARATH</name>
<accession>Q9FY66</accession>
<evidence type="ECO:0000303" key="1">
    <source>
    </source>
</evidence>
<evidence type="ECO:0000305" key="2"/>
<sequence length="152" mass="17140">MAEVEPDVSAAALAKKRTFKKFSFKGVDLDALLDMPTDDLVELFPSRIRRRMSRGLTRKPMALIKKLRKAKLDAPAGEKPEVVRTHLRNMVIMPEMIGSIIGVYNGKTFNQIEIKPEMIGHYLAEFSITYKPVRHGKPGHGATHSSRFIPLK</sequence>
<protein>
    <recommendedName>
        <fullName evidence="1">Small ribosomal subunit protein uS19z</fullName>
    </recommendedName>
    <alternativeName>
        <fullName>40S ribosomal protein S15-2</fullName>
    </alternativeName>
</protein>
<dbReference type="EMBL" id="AL391712">
    <property type="protein sequence ID" value="CAC05475.1"/>
    <property type="molecule type" value="Genomic_DNA"/>
</dbReference>
<dbReference type="EMBL" id="CP002688">
    <property type="protein sequence ID" value="AED91402.1"/>
    <property type="molecule type" value="Genomic_DNA"/>
</dbReference>
<dbReference type="EMBL" id="AY086958">
    <property type="protein sequence ID" value="AAM64521.1"/>
    <property type="molecule type" value="mRNA"/>
</dbReference>
<dbReference type="RefSeq" id="NP_196511.1">
    <property type="nucleotide sequence ID" value="NM_120986.3"/>
</dbReference>
<dbReference type="SMR" id="Q9FY66"/>
<dbReference type="BioGRID" id="16086">
    <property type="interactions" value="86"/>
</dbReference>
<dbReference type="FunCoup" id="Q9FY66">
    <property type="interactions" value="2741"/>
</dbReference>
<dbReference type="STRING" id="3702.Q9FY66"/>
<dbReference type="PaxDb" id="3702-AT5G09490.1"/>
<dbReference type="ProteomicsDB" id="226909"/>
<dbReference type="EnsemblPlants" id="AT5G09490.1">
    <property type="protein sequence ID" value="AT5G09490.1"/>
    <property type="gene ID" value="AT5G09490"/>
</dbReference>
<dbReference type="GeneID" id="830808"/>
<dbReference type="Gramene" id="AT5G09490.1">
    <property type="protein sequence ID" value="AT5G09490.1"/>
    <property type="gene ID" value="AT5G09490"/>
</dbReference>
<dbReference type="KEGG" id="ath:AT5G09490"/>
<dbReference type="Araport" id="AT5G09490"/>
<dbReference type="TAIR" id="AT5G09490"/>
<dbReference type="eggNOG" id="KOG0898">
    <property type="taxonomic scope" value="Eukaryota"/>
</dbReference>
<dbReference type="HOGENOM" id="CLU_097347_1_0_1"/>
<dbReference type="InParanoid" id="Q9FY66"/>
<dbReference type="OMA" id="DYSRHIL"/>
<dbReference type="OrthoDB" id="1843218at2759"/>
<dbReference type="PhylomeDB" id="Q9FY66"/>
<dbReference type="PRO" id="PR:Q9FY66"/>
<dbReference type="Proteomes" id="UP000006548">
    <property type="component" value="Chromosome 5"/>
</dbReference>
<dbReference type="ExpressionAtlas" id="Q9FY66">
    <property type="expression patterns" value="baseline and differential"/>
</dbReference>
<dbReference type="GO" id="GO:0022627">
    <property type="term" value="C:cytosolic small ribosomal subunit"/>
    <property type="evidence" value="ECO:0007005"/>
    <property type="project" value="TAIR"/>
</dbReference>
<dbReference type="GO" id="GO:0003723">
    <property type="term" value="F:RNA binding"/>
    <property type="evidence" value="ECO:0007669"/>
    <property type="project" value="InterPro"/>
</dbReference>
<dbReference type="GO" id="GO:0003735">
    <property type="term" value="F:structural constituent of ribosome"/>
    <property type="evidence" value="ECO:0000314"/>
    <property type="project" value="CAFA"/>
</dbReference>
<dbReference type="GO" id="GO:0006412">
    <property type="term" value="P:translation"/>
    <property type="evidence" value="ECO:0007669"/>
    <property type="project" value="InterPro"/>
</dbReference>
<dbReference type="FunFam" id="3.30.860.10:FF:000002">
    <property type="entry name" value="40S ribosomal protein S15"/>
    <property type="match status" value="1"/>
</dbReference>
<dbReference type="Gene3D" id="3.30.860.10">
    <property type="entry name" value="30s Ribosomal Protein S19, Chain A"/>
    <property type="match status" value="1"/>
</dbReference>
<dbReference type="HAMAP" id="MF_00531">
    <property type="entry name" value="Ribosomal_uS19"/>
    <property type="match status" value="1"/>
</dbReference>
<dbReference type="InterPro" id="IPR002222">
    <property type="entry name" value="Ribosomal_uS19"/>
</dbReference>
<dbReference type="InterPro" id="IPR020934">
    <property type="entry name" value="Ribosomal_uS19_CS"/>
</dbReference>
<dbReference type="InterPro" id="IPR005713">
    <property type="entry name" value="Ribosomal_uS19_euk/arc"/>
</dbReference>
<dbReference type="InterPro" id="IPR023575">
    <property type="entry name" value="Ribosomal_uS19_SF"/>
</dbReference>
<dbReference type="NCBIfam" id="NF003121">
    <property type="entry name" value="PRK04038.1"/>
    <property type="match status" value="1"/>
</dbReference>
<dbReference type="NCBIfam" id="TIGR01025">
    <property type="entry name" value="uS19_arch"/>
    <property type="match status" value="1"/>
</dbReference>
<dbReference type="PANTHER" id="PTHR11880">
    <property type="entry name" value="RIBOSOMAL PROTEIN S19P FAMILY MEMBER"/>
    <property type="match status" value="1"/>
</dbReference>
<dbReference type="PANTHER" id="PTHR11880:SF49">
    <property type="entry name" value="SMALL RIBOSOMAL SUBUNIT PROTEIN US19Z"/>
    <property type="match status" value="1"/>
</dbReference>
<dbReference type="Pfam" id="PF00203">
    <property type="entry name" value="Ribosomal_S19"/>
    <property type="match status" value="1"/>
</dbReference>
<dbReference type="PIRSF" id="PIRSF002144">
    <property type="entry name" value="Ribosomal_S19"/>
    <property type="match status" value="1"/>
</dbReference>
<dbReference type="PRINTS" id="PR00975">
    <property type="entry name" value="RIBOSOMALS19"/>
</dbReference>
<dbReference type="SUPFAM" id="SSF54570">
    <property type="entry name" value="Ribosomal protein S19"/>
    <property type="match status" value="1"/>
</dbReference>
<dbReference type="PROSITE" id="PS00323">
    <property type="entry name" value="RIBOSOMAL_S19"/>
    <property type="match status" value="1"/>
</dbReference>